<gene>
    <name evidence="1" type="primary">def</name>
    <name type="ordered locus">HH_0569</name>
</gene>
<name>DEF_HELHP</name>
<sequence length="181" mass="21072">MKYPEMTLATLAILKYPNALLRKKSIPVEIFDDNLHNFLDDMYETLIESKGVGLAAIQVGRAERILIINIPREEDKQQYKEDLLEIINPTFLTQEECVEWEEGCLSVPDFYESIKRFDKVSIAYKDRYGNDRILKAQGFLAVAIQHEIDHLNGVLFVDKLPILKRKKFEKELKKLKKESQA</sequence>
<accession>Q7VIN5</accession>
<keyword id="KW-0378">Hydrolase</keyword>
<keyword id="KW-0408">Iron</keyword>
<keyword id="KW-0479">Metal-binding</keyword>
<keyword id="KW-0648">Protein biosynthesis</keyword>
<keyword id="KW-1185">Reference proteome</keyword>
<feature type="chain" id="PRO_0000082789" description="Peptide deformylase">
    <location>
        <begin position="1"/>
        <end position="181"/>
    </location>
</feature>
<feature type="active site" evidence="1">
    <location>
        <position position="147"/>
    </location>
</feature>
<feature type="binding site" evidence="1">
    <location>
        <position position="104"/>
    </location>
    <ligand>
        <name>Fe cation</name>
        <dbReference type="ChEBI" id="CHEBI:24875"/>
    </ligand>
</feature>
<feature type="binding site" evidence="1">
    <location>
        <position position="146"/>
    </location>
    <ligand>
        <name>Fe cation</name>
        <dbReference type="ChEBI" id="CHEBI:24875"/>
    </ligand>
</feature>
<feature type="binding site" evidence="1">
    <location>
        <position position="150"/>
    </location>
    <ligand>
        <name>Fe cation</name>
        <dbReference type="ChEBI" id="CHEBI:24875"/>
    </ligand>
</feature>
<proteinExistence type="inferred from homology"/>
<reference key="1">
    <citation type="journal article" date="2003" name="Proc. Natl. Acad. Sci. U.S.A.">
        <title>The complete genome sequence of the carcinogenic bacterium Helicobacter hepaticus.</title>
        <authorList>
            <person name="Suerbaum S."/>
            <person name="Josenhans C."/>
            <person name="Sterzenbach T."/>
            <person name="Drescher B."/>
            <person name="Brandt P."/>
            <person name="Bell M."/>
            <person name="Droege M."/>
            <person name="Fartmann B."/>
            <person name="Fischer H.-P."/>
            <person name="Ge Z."/>
            <person name="Hoerster A."/>
            <person name="Holland R."/>
            <person name="Klein K."/>
            <person name="Koenig J."/>
            <person name="Macko L."/>
            <person name="Mendz G.L."/>
            <person name="Nyakatura G."/>
            <person name="Schauer D.B."/>
            <person name="Shen Z."/>
            <person name="Weber J."/>
            <person name="Frosch M."/>
            <person name="Fox J.G."/>
        </authorList>
    </citation>
    <scope>NUCLEOTIDE SEQUENCE [LARGE SCALE GENOMIC DNA]</scope>
    <source>
        <strain>ATCC 51449 / 3B1</strain>
    </source>
</reference>
<protein>
    <recommendedName>
        <fullName evidence="1">Peptide deformylase</fullName>
        <shortName evidence="1">PDF</shortName>
        <ecNumber evidence="1">3.5.1.88</ecNumber>
    </recommendedName>
    <alternativeName>
        <fullName evidence="1">Polypeptide deformylase</fullName>
    </alternativeName>
</protein>
<dbReference type="EC" id="3.5.1.88" evidence="1"/>
<dbReference type="EMBL" id="AE017125">
    <property type="protein sequence ID" value="AAP77166.1"/>
    <property type="molecule type" value="Genomic_DNA"/>
</dbReference>
<dbReference type="SMR" id="Q7VIN5"/>
<dbReference type="STRING" id="235279.HH_0569"/>
<dbReference type="KEGG" id="hhe:HH_0569"/>
<dbReference type="eggNOG" id="COG0242">
    <property type="taxonomic scope" value="Bacteria"/>
</dbReference>
<dbReference type="HOGENOM" id="CLU_061901_2_0_7"/>
<dbReference type="Proteomes" id="UP000002495">
    <property type="component" value="Chromosome"/>
</dbReference>
<dbReference type="GO" id="GO:0046872">
    <property type="term" value="F:metal ion binding"/>
    <property type="evidence" value="ECO:0007669"/>
    <property type="project" value="UniProtKB-KW"/>
</dbReference>
<dbReference type="GO" id="GO:0042586">
    <property type="term" value="F:peptide deformylase activity"/>
    <property type="evidence" value="ECO:0007669"/>
    <property type="project" value="UniProtKB-UniRule"/>
</dbReference>
<dbReference type="GO" id="GO:0043686">
    <property type="term" value="P:co-translational protein modification"/>
    <property type="evidence" value="ECO:0007669"/>
    <property type="project" value="TreeGrafter"/>
</dbReference>
<dbReference type="GO" id="GO:0006412">
    <property type="term" value="P:translation"/>
    <property type="evidence" value="ECO:0007669"/>
    <property type="project" value="UniProtKB-UniRule"/>
</dbReference>
<dbReference type="CDD" id="cd00487">
    <property type="entry name" value="Pep_deformylase"/>
    <property type="match status" value="1"/>
</dbReference>
<dbReference type="Gene3D" id="3.90.45.10">
    <property type="entry name" value="Peptide deformylase"/>
    <property type="match status" value="1"/>
</dbReference>
<dbReference type="HAMAP" id="MF_00163">
    <property type="entry name" value="Pep_deformylase"/>
    <property type="match status" value="1"/>
</dbReference>
<dbReference type="InterPro" id="IPR023635">
    <property type="entry name" value="Peptide_deformylase"/>
</dbReference>
<dbReference type="InterPro" id="IPR036821">
    <property type="entry name" value="Peptide_deformylase_sf"/>
</dbReference>
<dbReference type="NCBIfam" id="TIGR00079">
    <property type="entry name" value="pept_deformyl"/>
    <property type="match status" value="1"/>
</dbReference>
<dbReference type="NCBIfam" id="NF001159">
    <property type="entry name" value="PRK00150.1-3"/>
    <property type="match status" value="1"/>
</dbReference>
<dbReference type="PANTHER" id="PTHR10458">
    <property type="entry name" value="PEPTIDE DEFORMYLASE"/>
    <property type="match status" value="1"/>
</dbReference>
<dbReference type="PANTHER" id="PTHR10458:SF22">
    <property type="entry name" value="PEPTIDE DEFORMYLASE"/>
    <property type="match status" value="1"/>
</dbReference>
<dbReference type="Pfam" id="PF01327">
    <property type="entry name" value="Pep_deformylase"/>
    <property type="match status" value="1"/>
</dbReference>
<dbReference type="PIRSF" id="PIRSF004749">
    <property type="entry name" value="Pep_def"/>
    <property type="match status" value="1"/>
</dbReference>
<dbReference type="PRINTS" id="PR01576">
    <property type="entry name" value="PDEFORMYLASE"/>
</dbReference>
<dbReference type="SUPFAM" id="SSF56420">
    <property type="entry name" value="Peptide deformylase"/>
    <property type="match status" value="1"/>
</dbReference>
<evidence type="ECO:0000255" key="1">
    <source>
        <dbReference type="HAMAP-Rule" id="MF_00163"/>
    </source>
</evidence>
<organism>
    <name type="scientific">Helicobacter hepaticus (strain ATCC 51449 / 3B1)</name>
    <dbReference type="NCBI Taxonomy" id="235279"/>
    <lineage>
        <taxon>Bacteria</taxon>
        <taxon>Pseudomonadati</taxon>
        <taxon>Campylobacterota</taxon>
        <taxon>Epsilonproteobacteria</taxon>
        <taxon>Campylobacterales</taxon>
        <taxon>Helicobacteraceae</taxon>
        <taxon>Helicobacter</taxon>
    </lineage>
</organism>
<comment type="function">
    <text evidence="1">Removes the formyl group from the N-terminal Met of newly synthesized proteins. Requires at least a dipeptide for an efficient rate of reaction. N-terminal L-methionine is a prerequisite for activity but the enzyme has broad specificity at other positions.</text>
</comment>
<comment type="catalytic activity">
    <reaction evidence="1">
        <text>N-terminal N-formyl-L-methionyl-[peptide] + H2O = N-terminal L-methionyl-[peptide] + formate</text>
        <dbReference type="Rhea" id="RHEA:24420"/>
        <dbReference type="Rhea" id="RHEA-COMP:10639"/>
        <dbReference type="Rhea" id="RHEA-COMP:10640"/>
        <dbReference type="ChEBI" id="CHEBI:15377"/>
        <dbReference type="ChEBI" id="CHEBI:15740"/>
        <dbReference type="ChEBI" id="CHEBI:49298"/>
        <dbReference type="ChEBI" id="CHEBI:64731"/>
        <dbReference type="EC" id="3.5.1.88"/>
    </reaction>
</comment>
<comment type="cofactor">
    <cofactor evidence="1">
        <name>Fe(2+)</name>
        <dbReference type="ChEBI" id="CHEBI:29033"/>
    </cofactor>
    <text evidence="1">Binds 1 Fe(2+) ion.</text>
</comment>
<comment type="similarity">
    <text evidence="1">Belongs to the polypeptide deformylase family.</text>
</comment>